<name>SYS_PSEA6</name>
<evidence type="ECO:0000255" key="1">
    <source>
        <dbReference type="HAMAP-Rule" id="MF_00176"/>
    </source>
</evidence>
<accession>Q15T16</accession>
<organism>
    <name type="scientific">Pseudoalteromonas atlantica (strain T6c / ATCC BAA-1087)</name>
    <dbReference type="NCBI Taxonomy" id="3042615"/>
    <lineage>
        <taxon>Bacteria</taxon>
        <taxon>Pseudomonadati</taxon>
        <taxon>Pseudomonadota</taxon>
        <taxon>Gammaproteobacteria</taxon>
        <taxon>Alteromonadales</taxon>
        <taxon>Alteromonadaceae</taxon>
        <taxon>Paraglaciecola</taxon>
    </lineage>
</organism>
<proteinExistence type="inferred from homology"/>
<dbReference type="EC" id="6.1.1.11" evidence="1"/>
<dbReference type="EMBL" id="CP000388">
    <property type="protein sequence ID" value="ABG40972.1"/>
    <property type="molecule type" value="Genomic_DNA"/>
</dbReference>
<dbReference type="RefSeq" id="WP_011575244.1">
    <property type="nucleotide sequence ID" value="NC_008228.1"/>
</dbReference>
<dbReference type="SMR" id="Q15T16"/>
<dbReference type="STRING" id="342610.Patl_2456"/>
<dbReference type="KEGG" id="pat:Patl_2456"/>
<dbReference type="eggNOG" id="COG0172">
    <property type="taxonomic scope" value="Bacteria"/>
</dbReference>
<dbReference type="HOGENOM" id="CLU_023797_1_1_6"/>
<dbReference type="OrthoDB" id="9804647at2"/>
<dbReference type="UniPathway" id="UPA00906">
    <property type="reaction ID" value="UER00895"/>
</dbReference>
<dbReference type="Proteomes" id="UP000001981">
    <property type="component" value="Chromosome"/>
</dbReference>
<dbReference type="GO" id="GO:0005737">
    <property type="term" value="C:cytoplasm"/>
    <property type="evidence" value="ECO:0007669"/>
    <property type="project" value="UniProtKB-SubCell"/>
</dbReference>
<dbReference type="GO" id="GO:0005524">
    <property type="term" value="F:ATP binding"/>
    <property type="evidence" value="ECO:0007669"/>
    <property type="project" value="UniProtKB-UniRule"/>
</dbReference>
<dbReference type="GO" id="GO:0004828">
    <property type="term" value="F:serine-tRNA ligase activity"/>
    <property type="evidence" value="ECO:0007669"/>
    <property type="project" value="UniProtKB-UniRule"/>
</dbReference>
<dbReference type="GO" id="GO:0016260">
    <property type="term" value="P:selenocysteine biosynthetic process"/>
    <property type="evidence" value="ECO:0007669"/>
    <property type="project" value="UniProtKB-UniRule"/>
</dbReference>
<dbReference type="GO" id="GO:0006434">
    <property type="term" value="P:seryl-tRNA aminoacylation"/>
    <property type="evidence" value="ECO:0007669"/>
    <property type="project" value="UniProtKB-UniRule"/>
</dbReference>
<dbReference type="CDD" id="cd00770">
    <property type="entry name" value="SerRS_core"/>
    <property type="match status" value="1"/>
</dbReference>
<dbReference type="Gene3D" id="3.30.930.10">
    <property type="entry name" value="Bira Bifunctional Protein, Domain 2"/>
    <property type="match status" value="1"/>
</dbReference>
<dbReference type="Gene3D" id="1.10.287.40">
    <property type="entry name" value="Serine-tRNA synthetase, tRNA binding domain"/>
    <property type="match status" value="1"/>
</dbReference>
<dbReference type="HAMAP" id="MF_00176">
    <property type="entry name" value="Ser_tRNA_synth_type1"/>
    <property type="match status" value="1"/>
</dbReference>
<dbReference type="InterPro" id="IPR002314">
    <property type="entry name" value="aa-tRNA-synt_IIb"/>
</dbReference>
<dbReference type="InterPro" id="IPR006195">
    <property type="entry name" value="aa-tRNA-synth_II"/>
</dbReference>
<dbReference type="InterPro" id="IPR045864">
    <property type="entry name" value="aa-tRNA-synth_II/BPL/LPL"/>
</dbReference>
<dbReference type="InterPro" id="IPR002317">
    <property type="entry name" value="Ser-tRNA-ligase_type_1"/>
</dbReference>
<dbReference type="InterPro" id="IPR015866">
    <property type="entry name" value="Ser-tRNA-synth_1_N"/>
</dbReference>
<dbReference type="InterPro" id="IPR042103">
    <property type="entry name" value="SerRS_1_N_sf"/>
</dbReference>
<dbReference type="InterPro" id="IPR033729">
    <property type="entry name" value="SerRS_core"/>
</dbReference>
<dbReference type="InterPro" id="IPR010978">
    <property type="entry name" value="tRNA-bd_arm"/>
</dbReference>
<dbReference type="NCBIfam" id="TIGR00414">
    <property type="entry name" value="serS"/>
    <property type="match status" value="1"/>
</dbReference>
<dbReference type="PANTHER" id="PTHR43697:SF1">
    <property type="entry name" value="SERINE--TRNA LIGASE"/>
    <property type="match status" value="1"/>
</dbReference>
<dbReference type="PANTHER" id="PTHR43697">
    <property type="entry name" value="SERYL-TRNA SYNTHETASE"/>
    <property type="match status" value="1"/>
</dbReference>
<dbReference type="Pfam" id="PF02403">
    <property type="entry name" value="Seryl_tRNA_N"/>
    <property type="match status" value="1"/>
</dbReference>
<dbReference type="Pfam" id="PF00587">
    <property type="entry name" value="tRNA-synt_2b"/>
    <property type="match status" value="1"/>
</dbReference>
<dbReference type="PIRSF" id="PIRSF001529">
    <property type="entry name" value="Ser-tRNA-synth_IIa"/>
    <property type="match status" value="1"/>
</dbReference>
<dbReference type="PRINTS" id="PR00981">
    <property type="entry name" value="TRNASYNTHSER"/>
</dbReference>
<dbReference type="SUPFAM" id="SSF55681">
    <property type="entry name" value="Class II aaRS and biotin synthetases"/>
    <property type="match status" value="1"/>
</dbReference>
<dbReference type="SUPFAM" id="SSF46589">
    <property type="entry name" value="tRNA-binding arm"/>
    <property type="match status" value="1"/>
</dbReference>
<dbReference type="PROSITE" id="PS50862">
    <property type="entry name" value="AA_TRNA_LIGASE_II"/>
    <property type="match status" value="1"/>
</dbReference>
<gene>
    <name evidence="1" type="primary">serS</name>
    <name type="ordered locus">Patl_2456</name>
</gene>
<keyword id="KW-0030">Aminoacyl-tRNA synthetase</keyword>
<keyword id="KW-0067">ATP-binding</keyword>
<keyword id="KW-0963">Cytoplasm</keyword>
<keyword id="KW-0436">Ligase</keyword>
<keyword id="KW-0547">Nucleotide-binding</keyword>
<keyword id="KW-0648">Protein biosynthesis</keyword>
<reference key="1">
    <citation type="submission" date="2006-06" db="EMBL/GenBank/DDBJ databases">
        <title>Complete sequence of Pseudoalteromonas atlantica T6c.</title>
        <authorList>
            <consortium name="US DOE Joint Genome Institute"/>
            <person name="Copeland A."/>
            <person name="Lucas S."/>
            <person name="Lapidus A."/>
            <person name="Barry K."/>
            <person name="Detter J.C."/>
            <person name="Glavina del Rio T."/>
            <person name="Hammon N."/>
            <person name="Israni S."/>
            <person name="Dalin E."/>
            <person name="Tice H."/>
            <person name="Pitluck S."/>
            <person name="Saunders E."/>
            <person name="Brettin T."/>
            <person name="Bruce D."/>
            <person name="Han C."/>
            <person name="Tapia R."/>
            <person name="Gilna P."/>
            <person name="Schmutz J."/>
            <person name="Larimer F."/>
            <person name="Land M."/>
            <person name="Hauser L."/>
            <person name="Kyrpides N."/>
            <person name="Kim E."/>
            <person name="Karls A.C."/>
            <person name="Bartlett D."/>
            <person name="Higgins B.P."/>
            <person name="Richardson P."/>
        </authorList>
    </citation>
    <scope>NUCLEOTIDE SEQUENCE [LARGE SCALE GENOMIC DNA]</scope>
    <source>
        <strain>T6c / ATCC BAA-1087</strain>
    </source>
</reference>
<sequence>MLDAKYLRNDINIAAQKLEKRGYTLDVAQFTALEEKRKSLQMRTQELQNERNVRSKSIGKAKASGQDIEPLLAQVGQLGDELNAAKAELTGLLDEIQTLTLNIPNLPDDSVPEGKDEDENVEVSRWGTPREFDFEVKDHVDLGAGVANGLDFETATKLTGSRFVVMRGQIARLNRAIAQFMLDLHTEQHGYQEMYVPYLVNEESMLGTGQFPKFVGDAFHTKPATEEGQGLSLIPTSEVPLTNIARDCIFAANELPIKMTAHTPCFRSEAGSYGRDTRGLIRQHQFDKVEMVQLVEADKSFEALDELTGNAEKVLQLLELPYRKMLLCTGDMGFGACKTFDLEVWLPAQDTYREISSCSNMLDFQARRMQARYRDPQTNKTELLHTLNGSGLAVGRTLVAILENYQQADGSITIPEVLQPYMNGVTVIGAVK</sequence>
<protein>
    <recommendedName>
        <fullName evidence="1">Serine--tRNA ligase</fullName>
        <ecNumber evidence="1">6.1.1.11</ecNumber>
    </recommendedName>
    <alternativeName>
        <fullName evidence="1">Seryl-tRNA synthetase</fullName>
        <shortName evidence="1">SerRS</shortName>
    </alternativeName>
    <alternativeName>
        <fullName evidence="1">Seryl-tRNA(Ser/Sec) synthetase</fullName>
    </alternativeName>
</protein>
<comment type="function">
    <text evidence="1">Catalyzes the attachment of serine to tRNA(Ser). Is also able to aminoacylate tRNA(Sec) with serine, to form the misacylated tRNA L-seryl-tRNA(Sec), which will be further converted into selenocysteinyl-tRNA(Sec).</text>
</comment>
<comment type="catalytic activity">
    <reaction evidence="1">
        <text>tRNA(Ser) + L-serine + ATP = L-seryl-tRNA(Ser) + AMP + diphosphate + H(+)</text>
        <dbReference type="Rhea" id="RHEA:12292"/>
        <dbReference type="Rhea" id="RHEA-COMP:9669"/>
        <dbReference type="Rhea" id="RHEA-COMP:9703"/>
        <dbReference type="ChEBI" id="CHEBI:15378"/>
        <dbReference type="ChEBI" id="CHEBI:30616"/>
        <dbReference type="ChEBI" id="CHEBI:33019"/>
        <dbReference type="ChEBI" id="CHEBI:33384"/>
        <dbReference type="ChEBI" id="CHEBI:78442"/>
        <dbReference type="ChEBI" id="CHEBI:78533"/>
        <dbReference type="ChEBI" id="CHEBI:456215"/>
        <dbReference type="EC" id="6.1.1.11"/>
    </reaction>
</comment>
<comment type="catalytic activity">
    <reaction evidence="1">
        <text>tRNA(Sec) + L-serine + ATP = L-seryl-tRNA(Sec) + AMP + diphosphate + H(+)</text>
        <dbReference type="Rhea" id="RHEA:42580"/>
        <dbReference type="Rhea" id="RHEA-COMP:9742"/>
        <dbReference type="Rhea" id="RHEA-COMP:10128"/>
        <dbReference type="ChEBI" id="CHEBI:15378"/>
        <dbReference type="ChEBI" id="CHEBI:30616"/>
        <dbReference type="ChEBI" id="CHEBI:33019"/>
        <dbReference type="ChEBI" id="CHEBI:33384"/>
        <dbReference type="ChEBI" id="CHEBI:78442"/>
        <dbReference type="ChEBI" id="CHEBI:78533"/>
        <dbReference type="ChEBI" id="CHEBI:456215"/>
        <dbReference type="EC" id="6.1.1.11"/>
    </reaction>
</comment>
<comment type="pathway">
    <text evidence="1">Aminoacyl-tRNA biosynthesis; selenocysteinyl-tRNA(Sec) biosynthesis; L-seryl-tRNA(Sec) from L-serine and tRNA(Sec): step 1/1.</text>
</comment>
<comment type="subunit">
    <text evidence="1">Homodimer. The tRNA molecule binds across the dimer.</text>
</comment>
<comment type="subcellular location">
    <subcellularLocation>
        <location evidence="1">Cytoplasm</location>
    </subcellularLocation>
</comment>
<comment type="domain">
    <text evidence="1">Consists of two distinct domains, a catalytic core and a N-terminal extension that is involved in tRNA binding.</text>
</comment>
<comment type="similarity">
    <text evidence="1">Belongs to the class-II aminoacyl-tRNA synthetase family. Type-1 seryl-tRNA synthetase subfamily.</text>
</comment>
<feature type="chain" id="PRO_1000019771" description="Serine--tRNA ligase">
    <location>
        <begin position="1"/>
        <end position="432"/>
    </location>
</feature>
<feature type="binding site" evidence="1">
    <location>
        <begin position="236"/>
        <end position="238"/>
    </location>
    <ligand>
        <name>L-serine</name>
        <dbReference type="ChEBI" id="CHEBI:33384"/>
    </ligand>
</feature>
<feature type="binding site" evidence="1">
    <location>
        <begin position="267"/>
        <end position="269"/>
    </location>
    <ligand>
        <name>ATP</name>
        <dbReference type="ChEBI" id="CHEBI:30616"/>
    </ligand>
</feature>
<feature type="binding site" evidence="1">
    <location>
        <position position="290"/>
    </location>
    <ligand>
        <name>L-serine</name>
        <dbReference type="ChEBI" id="CHEBI:33384"/>
    </ligand>
</feature>
<feature type="binding site" evidence="1">
    <location>
        <begin position="354"/>
        <end position="357"/>
    </location>
    <ligand>
        <name>ATP</name>
        <dbReference type="ChEBI" id="CHEBI:30616"/>
    </ligand>
</feature>
<feature type="binding site" evidence="1">
    <location>
        <position position="390"/>
    </location>
    <ligand>
        <name>L-serine</name>
        <dbReference type="ChEBI" id="CHEBI:33384"/>
    </ligand>
</feature>